<proteinExistence type="inferred from homology"/>
<comment type="function">
    <text evidence="1">Exhibits S-adenosyl-L-methionine-dependent methyltransferase activity.</text>
</comment>
<comment type="similarity">
    <text evidence="2">Belongs to the UPF0677 family.</text>
</comment>
<name>Y027_MYCA9</name>
<protein>
    <recommendedName>
        <fullName>Putative S-adenosyl-L-methionine-dependent methyltransferase MAB_0027c</fullName>
        <ecNumber>2.1.1.-</ecNumber>
    </recommendedName>
</protein>
<feature type="chain" id="PRO_0000361119" description="Putative S-adenosyl-L-methionine-dependent methyltransferase MAB_0027c">
    <location>
        <begin position="1"/>
        <end position="299"/>
    </location>
</feature>
<feature type="binding site" evidence="1">
    <location>
        <position position="126"/>
    </location>
    <ligand>
        <name>S-adenosyl-L-methionine</name>
        <dbReference type="ChEBI" id="CHEBI:59789"/>
    </ligand>
</feature>
<feature type="binding site" evidence="1">
    <location>
        <begin position="155"/>
        <end position="156"/>
    </location>
    <ligand>
        <name>S-adenosyl-L-methionine</name>
        <dbReference type="ChEBI" id="CHEBI:59789"/>
    </ligand>
</feature>
<gene>
    <name type="ordered locus">MAB_0027c</name>
</gene>
<evidence type="ECO:0000250" key="1"/>
<evidence type="ECO:0000305" key="2"/>
<organism>
    <name type="scientific">Mycobacteroides abscessus (strain ATCC 19977 / DSM 44196 / CCUG 20993 / CIP 104536 / JCM 13569 / NCTC 13031 / TMC 1543 / L948)</name>
    <name type="common">Mycobacterium abscessus</name>
    <dbReference type="NCBI Taxonomy" id="561007"/>
    <lineage>
        <taxon>Bacteria</taxon>
        <taxon>Bacillati</taxon>
        <taxon>Actinomycetota</taxon>
        <taxon>Actinomycetes</taxon>
        <taxon>Mycobacteriales</taxon>
        <taxon>Mycobacteriaceae</taxon>
        <taxon>Mycobacteroides</taxon>
        <taxon>Mycobacteroides abscessus</taxon>
    </lineage>
</organism>
<sequence length="299" mass="33446">MTRTDGDQWDIVSSVGFTALMVSSFRALETTRTEPLIRDEYARAFVEASGEPRLTEALAAGTPESEWDTATVYLVNHLAVRTKYFDEFFAAATGSGIQQVVILAAGLDSRVYRLPWPDGTVVYELDQPKVLEFKDHVLREEHAVPLAERREVAVDLRDDWIAALRTAGFDATKPTAWLAEGLLAYLPGAAQDALFENITAHSAPGSFLATEWRRRQATAGQWQDAVNKLKPEFIKDISIGSLIYDDERQDPIEWLREHGWQVDTANRLEQAAAYGRPAPSEHSDVTSLWSDAYFITATR</sequence>
<keyword id="KW-0489">Methyltransferase</keyword>
<keyword id="KW-1185">Reference proteome</keyword>
<keyword id="KW-0949">S-adenosyl-L-methionine</keyword>
<keyword id="KW-0808">Transferase</keyword>
<accession>B1ME65</accession>
<dbReference type="EC" id="2.1.1.-"/>
<dbReference type="EMBL" id="CU458896">
    <property type="protein sequence ID" value="CAM60129.1"/>
    <property type="molecule type" value="Genomic_DNA"/>
</dbReference>
<dbReference type="RefSeq" id="WP_005082857.1">
    <property type="nucleotide sequence ID" value="NZ_MLCG01000007.1"/>
</dbReference>
<dbReference type="SMR" id="B1ME65"/>
<dbReference type="GeneID" id="93376971"/>
<dbReference type="KEGG" id="mab:MAB_0027c"/>
<dbReference type="Proteomes" id="UP000007137">
    <property type="component" value="Chromosome"/>
</dbReference>
<dbReference type="GO" id="GO:0008168">
    <property type="term" value="F:methyltransferase activity"/>
    <property type="evidence" value="ECO:0007669"/>
    <property type="project" value="UniProtKB-KW"/>
</dbReference>
<dbReference type="GO" id="GO:0032259">
    <property type="term" value="P:methylation"/>
    <property type="evidence" value="ECO:0007669"/>
    <property type="project" value="UniProtKB-KW"/>
</dbReference>
<dbReference type="Gene3D" id="3.40.50.150">
    <property type="entry name" value="Vaccinia Virus protein VP39"/>
    <property type="match status" value="1"/>
</dbReference>
<dbReference type="InterPro" id="IPR007213">
    <property type="entry name" value="Ppm1/Ppm2/Tcmp"/>
</dbReference>
<dbReference type="InterPro" id="IPR029063">
    <property type="entry name" value="SAM-dependent_MTases_sf"/>
</dbReference>
<dbReference type="InterPro" id="IPR011610">
    <property type="entry name" value="SAM_mthyl_Trfase_ML2640-like"/>
</dbReference>
<dbReference type="NCBIfam" id="TIGR00027">
    <property type="entry name" value="mthyl_TIGR00027"/>
    <property type="match status" value="1"/>
</dbReference>
<dbReference type="PANTHER" id="PTHR43619">
    <property type="entry name" value="S-ADENOSYL-L-METHIONINE-DEPENDENT METHYLTRANSFERASE YKTD-RELATED"/>
    <property type="match status" value="1"/>
</dbReference>
<dbReference type="PANTHER" id="PTHR43619:SF2">
    <property type="entry name" value="S-ADENOSYL-L-METHIONINE-DEPENDENT METHYLTRANSFERASES SUPERFAMILY PROTEIN"/>
    <property type="match status" value="1"/>
</dbReference>
<dbReference type="Pfam" id="PF04072">
    <property type="entry name" value="LCM"/>
    <property type="match status" value="1"/>
</dbReference>
<dbReference type="SUPFAM" id="SSF53335">
    <property type="entry name" value="S-adenosyl-L-methionine-dependent methyltransferases"/>
    <property type="match status" value="1"/>
</dbReference>
<reference key="1">
    <citation type="journal article" date="2009" name="PLoS ONE">
        <title>Non mycobacterial virulence genes in the genome of the emerging pathogen Mycobacterium abscessus.</title>
        <authorList>
            <person name="Ripoll F."/>
            <person name="Pasek S."/>
            <person name="Schenowitz C."/>
            <person name="Dossat C."/>
            <person name="Barbe V."/>
            <person name="Rottman M."/>
            <person name="Macheras E."/>
            <person name="Heym B."/>
            <person name="Herrmann J.L."/>
            <person name="Daffe M."/>
            <person name="Brosch R."/>
            <person name="Risler J.L."/>
            <person name="Gaillard J.L."/>
        </authorList>
    </citation>
    <scope>NUCLEOTIDE SEQUENCE [LARGE SCALE GENOMIC DNA]</scope>
    <source>
        <strain>ATCC 19977 / DSM 44196 / CCUG 20993 / CIP 104536 / JCM 13569 / NCTC 13031 / TMC 1543 / L948</strain>
    </source>
</reference>